<reference key="1">
    <citation type="submission" date="1995-07" db="EMBL/GenBank/DDBJ databases">
        <authorList>
            <person name="Boman A.L."/>
        </authorList>
    </citation>
    <scope>NUCLEOTIDE SEQUENCE [MRNA]</scope>
</reference>
<reference key="2">
    <citation type="journal article" date="2006" name="Dev. Cell">
        <title>XGAP, an ArfGAP, is required for polarized localization of PAR proteins and cell polarity in Xenopus gastrulation.</title>
        <authorList>
            <person name="Hyodo-Miura J."/>
            <person name="Yamamoto T.S."/>
            <person name="Hyodo A.C."/>
            <person name="Iemura S."/>
            <person name="Kusakabe M."/>
            <person name="Nishida E."/>
            <person name="Natsume T."/>
            <person name="Ueno N."/>
        </authorList>
    </citation>
    <scope>NUCLEOTIDE SEQUENCE [MRNA]</scope>
</reference>
<reference key="3">
    <citation type="submission" date="2003-06" db="EMBL/GenBank/DDBJ databases">
        <authorList>
            <consortium name="NIH - Xenopus Gene Collection (XGC) project"/>
        </authorList>
    </citation>
    <scope>NUCLEOTIDE SEQUENCE [LARGE SCALE MRNA]</scope>
</reference>
<dbReference type="EMBL" id="U31460">
    <property type="protein sequence ID" value="AAA74951.1"/>
    <property type="molecule type" value="mRNA"/>
</dbReference>
<dbReference type="EMBL" id="AB195295">
    <property type="protein sequence ID" value="BAE94176.1"/>
    <property type="molecule type" value="mRNA"/>
</dbReference>
<dbReference type="EMBL" id="BC054189">
    <property type="protein sequence ID" value="AAH54189.1"/>
    <property type="molecule type" value="mRNA"/>
</dbReference>
<dbReference type="RefSeq" id="NP_001082540.1">
    <property type="nucleotide sequence ID" value="NM_001089071.1"/>
</dbReference>
<dbReference type="RefSeq" id="NP_001090186.1">
    <property type="nucleotide sequence ID" value="NM_001096717.1"/>
</dbReference>
<dbReference type="SMR" id="P51644"/>
<dbReference type="IntAct" id="P51644">
    <property type="interactions" value="1"/>
</dbReference>
<dbReference type="MINT" id="P51644"/>
<dbReference type="DNASU" id="398551"/>
<dbReference type="GeneID" id="398551"/>
<dbReference type="GeneID" id="779066"/>
<dbReference type="KEGG" id="xla:398551"/>
<dbReference type="KEGG" id="xla:779066"/>
<dbReference type="AGR" id="Xenbase:XB-GENE-865045"/>
<dbReference type="CTD" id="398551"/>
<dbReference type="CTD" id="779066"/>
<dbReference type="Xenbase" id="XB-GENE-865045">
    <property type="gene designation" value="arf4.L"/>
</dbReference>
<dbReference type="OMA" id="DWLCNEL"/>
<dbReference type="OrthoDB" id="2011769at2759"/>
<dbReference type="Proteomes" id="UP000186698">
    <property type="component" value="Chromosome 4L"/>
</dbReference>
<dbReference type="Proteomes" id="UP000186698">
    <property type="component" value="Chromosome 4S"/>
</dbReference>
<dbReference type="Bgee" id="398551">
    <property type="expression patterns" value="Expressed in gastrula and 19 other cell types or tissues"/>
</dbReference>
<dbReference type="GO" id="GO:0005737">
    <property type="term" value="C:cytoplasm"/>
    <property type="evidence" value="ECO:0000318"/>
    <property type="project" value="GO_Central"/>
</dbReference>
<dbReference type="GO" id="GO:0005794">
    <property type="term" value="C:Golgi apparatus"/>
    <property type="evidence" value="ECO:0007669"/>
    <property type="project" value="UniProtKB-SubCell"/>
</dbReference>
<dbReference type="GO" id="GO:0005886">
    <property type="term" value="C:plasma membrane"/>
    <property type="evidence" value="ECO:0000318"/>
    <property type="project" value="GO_Central"/>
</dbReference>
<dbReference type="GO" id="GO:0005525">
    <property type="term" value="F:GTP binding"/>
    <property type="evidence" value="ECO:0000318"/>
    <property type="project" value="GO_Central"/>
</dbReference>
<dbReference type="GO" id="GO:0003924">
    <property type="term" value="F:GTPase activity"/>
    <property type="evidence" value="ECO:0007669"/>
    <property type="project" value="InterPro"/>
</dbReference>
<dbReference type="GO" id="GO:0006886">
    <property type="term" value="P:intracellular protein transport"/>
    <property type="evidence" value="ECO:0000318"/>
    <property type="project" value="GO_Central"/>
</dbReference>
<dbReference type="GO" id="GO:0016192">
    <property type="term" value="P:vesicle-mediated transport"/>
    <property type="evidence" value="ECO:0000318"/>
    <property type="project" value="GO_Central"/>
</dbReference>
<dbReference type="CDD" id="cd04150">
    <property type="entry name" value="Arf1_5_like"/>
    <property type="match status" value="1"/>
</dbReference>
<dbReference type="FunFam" id="3.40.50.300:FF:000024">
    <property type="entry name" value="ADP-ribosylation factor 1"/>
    <property type="match status" value="1"/>
</dbReference>
<dbReference type="Gene3D" id="3.40.50.300">
    <property type="entry name" value="P-loop containing nucleotide triphosphate hydrolases"/>
    <property type="match status" value="1"/>
</dbReference>
<dbReference type="InterPro" id="IPR045872">
    <property type="entry name" value="Arf1-5-like"/>
</dbReference>
<dbReference type="InterPro" id="IPR027417">
    <property type="entry name" value="P-loop_NTPase"/>
</dbReference>
<dbReference type="InterPro" id="IPR005225">
    <property type="entry name" value="Small_GTP-bd"/>
</dbReference>
<dbReference type="InterPro" id="IPR024156">
    <property type="entry name" value="Small_GTPase_ARF"/>
</dbReference>
<dbReference type="InterPro" id="IPR006689">
    <property type="entry name" value="Small_GTPase_ARF/SAR"/>
</dbReference>
<dbReference type="NCBIfam" id="TIGR00231">
    <property type="entry name" value="small_GTP"/>
    <property type="match status" value="1"/>
</dbReference>
<dbReference type="PANTHER" id="PTHR11711">
    <property type="entry name" value="ADP RIBOSYLATION FACTOR-RELATED"/>
    <property type="match status" value="1"/>
</dbReference>
<dbReference type="Pfam" id="PF00025">
    <property type="entry name" value="Arf"/>
    <property type="match status" value="1"/>
</dbReference>
<dbReference type="PRINTS" id="PR00328">
    <property type="entry name" value="SAR1GTPBP"/>
</dbReference>
<dbReference type="SMART" id="SM00177">
    <property type="entry name" value="ARF"/>
    <property type="match status" value="1"/>
</dbReference>
<dbReference type="SMART" id="SM00175">
    <property type="entry name" value="RAB"/>
    <property type="match status" value="1"/>
</dbReference>
<dbReference type="SMART" id="SM00178">
    <property type="entry name" value="SAR"/>
    <property type="match status" value="1"/>
</dbReference>
<dbReference type="SUPFAM" id="SSF52540">
    <property type="entry name" value="P-loop containing nucleoside triphosphate hydrolases"/>
    <property type="match status" value="1"/>
</dbReference>
<dbReference type="PROSITE" id="PS51417">
    <property type="entry name" value="ARF"/>
    <property type="match status" value="1"/>
</dbReference>
<sequence length="180" mass="20586">MGLTISSLFSRLFGKKQMRILMVGLDAAGKTTILYKLKLGEIVTTIPTIGFNVETVEYKNICFTVWDVGGQDKIRPLWRHYFQNTQGLIFVVDSNDRERIQEAAEELQKMLQEDELRDAVLLVFANKQDLPNAMAISEMTDKLTLQTLRNRTWYVQATCATQGTGLYEGLDWLSNELSKR</sequence>
<accession>P51644</accession>
<accession>Q5D083</accession>
<keyword id="KW-0931">ER-Golgi transport</keyword>
<keyword id="KW-0333">Golgi apparatus</keyword>
<keyword id="KW-0342">GTP-binding</keyword>
<keyword id="KW-0449">Lipoprotein</keyword>
<keyword id="KW-0519">Myristate</keyword>
<keyword id="KW-0547">Nucleotide-binding</keyword>
<keyword id="KW-0653">Protein transport</keyword>
<keyword id="KW-1185">Reference proteome</keyword>
<keyword id="KW-0813">Transport</keyword>
<comment type="function">
    <text evidence="1 2">GTP-binding protein involved in protein trafficking; may modulate vesicle budding and uncoating within the Golgi apparatus. May be involved in ciliogenesis (By similarity).</text>
</comment>
<comment type="interaction">
    <interactant intactId="EBI-7491013">
        <id>P51644</id>
    </interactant>
    <interactant intactId="EBI-7490990">
        <id>P29403</id>
        <label>rho</label>
    </interactant>
    <organismsDiffer>false</organismsDiffer>
    <experiments>2</experiments>
</comment>
<comment type="subcellular location">
    <subcellularLocation>
        <location evidence="2">Golgi apparatus</location>
    </subcellularLocation>
</comment>
<comment type="similarity">
    <text evidence="4">Belongs to the small GTPase superfamily. Arf family.</text>
</comment>
<evidence type="ECO:0000250" key="1"/>
<evidence type="ECO:0000250" key="2">
    <source>
        <dbReference type="UniProtKB" id="P18085"/>
    </source>
</evidence>
<evidence type="ECO:0000255" key="3"/>
<evidence type="ECO:0000305" key="4"/>
<organism>
    <name type="scientific">Xenopus laevis</name>
    <name type="common">African clawed frog</name>
    <dbReference type="NCBI Taxonomy" id="8355"/>
    <lineage>
        <taxon>Eukaryota</taxon>
        <taxon>Metazoa</taxon>
        <taxon>Chordata</taxon>
        <taxon>Craniata</taxon>
        <taxon>Vertebrata</taxon>
        <taxon>Euteleostomi</taxon>
        <taxon>Amphibia</taxon>
        <taxon>Batrachia</taxon>
        <taxon>Anura</taxon>
        <taxon>Pipoidea</taxon>
        <taxon>Pipidae</taxon>
        <taxon>Xenopodinae</taxon>
        <taxon>Xenopus</taxon>
        <taxon>Xenopus</taxon>
    </lineage>
</organism>
<protein>
    <recommendedName>
        <fullName>ADP-ribosylation factor 4</fullName>
    </recommendedName>
</protein>
<name>ARF4_XENLA</name>
<gene>
    <name type="primary">arf4</name>
</gene>
<feature type="initiator methionine" description="Removed" evidence="3">
    <location>
        <position position="1"/>
    </location>
</feature>
<feature type="chain" id="PRO_0000207395" description="ADP-ribosylation factor 4">
    <location>
        <begin position="2"/>
        <end position="180"/>
    </location>
</feature>
<feature type="binding site" evidence="1">
    <location>
        <begin position="24"/>
        <end position="31"/>
    </location>
    <ligand>
        <name>GTP</name>
        <dbReference type="ChEBI" id="CHEBI:37565"/>
    </ligand>
</feature>
<feature type="binding site" evidence="1">
    <location>
        <begin position="67"/>
        <end position="71"/>
    </location>
    <ligand>
        <name>GTP</name>
        <dbReference type="ChEBI" id="CHEBI:37565"/>
    </ligand>
</feature>
<feature type="binding site" evidence="1">
    <location>
        <begin position="126"/>
        <end position="129"/>
    </location>
    <ligand>
        <name>GTP</name>
        <dbReference type="ChEBI" id="CHEBI:37565"/>
    </ligand>
</feature>
<feature type="lipid moiety-binding region" description="N-myristoyl glycine" evidence="3">
    <location>
        <position position="2"/>
    </location>
</feature>
<proteinExistence type="evidence at protein level"/>